<gene>
    <name type="primary">Rps20</name>
</gene>
<feature type="initiator methionine" description="Removed" evidence="1">
    <location>
        <position position="1"/>
    </location>
</feature>
<feature type="chain" id="PRO_0000146684" description="Small ribosomal subunit protein uS10">
    <location>
        <begin position="2"/>
        <end position="119"/>
    </location>
</feature>
<feature type="modified residue" description="N-acetylalanine" evidence="1">
    <location>
        <position position="2"/>
    </location>
</feature>
<feature type="modified residue" description="N6-succinyllysine; alternate" evidence="7">
    <location>
        <position position="8"/>
    </location>
</feature>
<feature type="modified residue" description="Phosphothreonine" evidence="1">
    <location>
        <position position="9"/>
    </location>
</feature>
<feature type="modified residue" description="N6-acetyllysine" evidence="7">
    <location>
        <position position="34"/>
    </location>
</feature>
<feature type="modified residue" description="N6-acetyllysine" evidence="7">
    <location>
        <position position="75"/>
    </location>
</feature>
<feature type="modified residue" description="Phosphoserine" evidence="1">
    <location>
        <position position="93"/>
    </location>
</feature>
<feature type="cross-link" description="Glycyl lysine isopeptide (Lys-Gly) (interchain with G-Cter in ubiquitin)" evidence="1">
    <location>
        <position position="4"/>
    </location>
</feature>
<feature type="cross-link" description="Glycyl lysine isopeptide (Lys-Gly) (interchain with G-Cter in ubiquitin); alternate" evidence="1">
    <location>
        <position position="8"/>
    </location>
</feature>
<evidence type="ECO:0000250" key="1">
    <source>
        <dbReference type="UniProtKB" id="P60866"/>
    </source>
</evidence>
<evidence type="ECO:0000269" key="2">
    <source>
    </source>
</evidence>
<evidence type="ECO:0000269" key="3">
    <source>
    </source>
</evidence>
<evidence type="ECO:0000305" key="4"/>
<evidence type="ECO:0007744" key="5">
    <source>
        <dbReference type="PDB" id="7CPU"/>
    </source>
</evidence>
<evidence type="ECO:0007744" key="6">
    <source>
        <dbReference type="PDB" id="7CPV"/>
    </source>
</evidence>
<evidence type="ECO:0007744" key="7">
    <source>
    </source>
</evidence>
<proteinExistence type="evidence at protein level"/>
<organism>
    <name type="scientific">Mus musculus</name>
    <name type="common">Mouse</name>
    <dbReference type="NCBI Taxonomy" id="10090"/>
    <lineage>
        <taxon>Eukaryota</taxon>
        <taxon>Metazoa</taxon>
        <taxon>Chordata</taxon>
        <taxon>Craniata</taxon>
        <taxon>Vertebrata</taxon>
        <taxon>Euteleostomi</taxon>
        <taxon>Mammalia</taxon>
        <taxon>Eutheria</taxon>
        <taxon>Euarchontoglires</taxon>
        <taxon>Glires</taxon>
        <taxon>Rodentia</taxon>
        <taxon>Myomorpha</taxon>
        <taxon>Muroidea</taxon>
        <taxon>Muridae</taxon>
        <taxon>Murinae</taxon>
        <taxon>Mus</taxon>
        <taxon>Mus</taxon>
    </lineage>
</organism>
<keyword id="KW-0002">3D-structure</keyword>
<keyword id="KW-0007">Acetylation</keyword>
<keyword id="KW-0963">Cytoplasm</keyword>
<keyword id="KW-1017">Isopeptide bond</keyword>
<keyword id="KW-0597">Phosphoprotein</keyword>
<keyword id="KW-1185">Reference proteome</keyword>
<keyword id="KW-0687">Ribonucleoprotein</keyword>
<keyword id="KW-0689">Ribosomal protein</keyword>
<keyword id="KW-0832">Ubl conjugation</keyword>
<dbReference type="EMBL" id="AK002405">
    <property type="protein sequence ID" value="BAB22075.1"/>
    <property type="molecule type" value="mRNA"/>
</dbReference>
<dbReference type="EMBL" id="AK014594">
    <property type="protein sequence ID" value="BAB29450.1"/>
    <property type="molecule type" value="mRNA"/>
</dbReference>
<dbReference type="EMBL" id="BC011323">
    <property type="protein sequence ID" value="AAH11323.1"/>
    <property type="molecule type" value="mRNA"/>
</dbReference>
<dbReference type="CCDS" id="CCDS17940.1"/>
<dbReference type="RefSeq" id="NP_080423.1">
    <property type="nucleotide sequence ID" value="NM_026147.7"/>
</dbReference>
<dbReference type="PDB" id="7CPU">
    <property type="method" value="EM"/>
    <property type="resolution" value="2.82 A"/>
    <property type="chains" value="SU=1-119"/>
</dbReference>
<dbReference type="PDB" id="7CPV">
    <property type="method" value="EM"/>
    <property type="resolution" value="3.03 A"/>
    <property type="chains" value="SU=1-119"/>
</dbReference>
<dbReference type="PDB" id="7LS1">
    <property type="method" value="EM"/>
    <property type="resolution" value="3.30 A"/>
    <property type="chains" value="C3=1-119"/>
</dbReference>
<dbReference type="PDB" id="7LS2">
    <property type="method" value="EM"/>
    <property type="resolution" value="3.10 A"/>
    <property type="chains" value="C3=1-119"/>
</dbReference>
<dbReference type="PDBsum" id="7CPU"/>
<dbReference type="PDBsum" id="7CPV"/>
<dbReference type="PDBsum" id="7LS1"/>
<dbReference type="PDBsum" id="7LS2"/>
<dbReference type="EMDB" id="EMD-23500"/>
<dbReference type="EMDB" id="EMD-23501"/>
<dbReference type="EMDB" id="EMD-30432"/>
<dbReference type="EMDB" id="EMD-30433"/>
<dbReference type="SMR" id="P60867"/>
<dbReference type="BioGRID" id="212179">
    <property type="interactions" value="80"/>
</dbReference>
<dbReference type="ComplexPortal" id="CPX-5261">
    <property type="entry name" value="40S cytosolic small ribosomal subunit"/>
</dbReference>
<dbReference type="FunCoup" id="P60867">
    <property type="interactions" value="1618"/>
</dbReference>
<dbReference type="IntAct" id="P60867">
    <property type="interactions" value="6"/>
</dbReference>
<dbReference type="MINT" id="P60867"/>
<dbReference type="STRING" id="10090.ENSMUSP00000120528"/>
<dbReference type="GlyGen" id="P60867">
    <property type="glycosylation" value="1 site, 1 O-linked glycan (1 site)"/>
</dbReference>
<dbReference type="iPTMnet" id="P60867"/>
<dbReference type="PhosphoSitePlus" id="P60867"/>
<dbReference type="SwissPalm" id="P60867"/>
<dbReference type="CPTAC" id="non-CPTAC-3614"/>
<dbReference type="jPOST" id="P60867"/>
<dbReference type="PaxDb" id="10090-ENSMUSP00000120528"/>
<dbReference type="PeptideAtlas" id="P60867"/>
<dbReference type="ProteomicsDB" id="299900"/>
<dbReference type="Pumba" id="P60867"/>
<dbReference type="DNASU" id="67427"/>
<dbReference type="Ensembl" id="ENSMUST00000138502.2">
    <property type="protein sequence ID" value="ENSMUSP00000120528.2"/>
    <property type="gene ID" value="ENSMUSG00000028234.7"/>
</dbReference>
<dbReference type="GeneID" id="67427"/>
<dbReference type="KEGG" id="mmu:67427"/>
<dbReference type="UCSC" id="uc008rwn.1">
    <property type="organism name" value="mouse"/>
</dbReference>
<dbReference type="AGR" id="MGI:1914677"/>
<dbReference type="CTD" id="6224"/>
<dbReference type="MGI" id="MGI:1914677">
    <property type="gene designation" value="Rps20"/>
</dbReference>
<dbReference type="VEuPathDB" id="HostDB:ENSMUSG00000028234"/>
<dbReference type="eggNOG" id="KOG0900">
    <property type="taxonomic scope" value="Eukaryota"/>
</dbReference>
<dbReference type="GeneTree" id="ENSGT00390000003248"/>
<dbReference type="HOGENOM" id="CLU_122625_0_0_1"/>
<dbReference type="InParanoid" id="P60867"/>
<dbReference type="OMA" id="WCEYRRR"/>
<dbReference type="OrthoDB" id="9612047at2759"/>
<dbReference type="PhylomeDB" id="P60867"/>
<dbReference type="TreeFam" id="TF300222"/>
<dbReference type="Reactome" id="R-MMU-156827">
    <property type="pathway name" value="L13a-mediated translational silencing of Ceruloplasmin expression"/>
</dbReference>
<dbReference type="Reactome" id="R-MMU-1799339">
    <property type="pathway name" value="SRP-dependent cotranslational protein targeting to membrane"/>
</dbReference>
<dbReference type="Reactome" id="R-MMU-6791226">
    <property type="pathway name" value="Major pathway of rRNA processing in the nucleolus and cytosol"/>
</dbReference>
<dbReference type="Reactome" id="R-MMU-72649">
    <property type="pathway name" value="Translation initiation complex formation"/>
</dbReference>
<dbReference type="Reactome" id="R-MMU-72689">
    <property type="pathway name" value="Formation of a pool of free 40S subunits"/>
</dbReference>
<dbReference type="Reactome" id="R-MMU-72695">
    <property type="pathway name" value="Formation of the ternary complex, and subsequently, the 43S complex"/>
</dbReference>
<dbReference type="Reactome" id="R-MMU-72702">
    <property type="pathway name" value="Ribosomal scanning and start codon recognition"/>
</dbReference>
<dbReference type="Reactome" id="R-MMU-72706">
    <property type="pathway name" value="GTP hydrolysis and joining of the 60S ribosomal subunit"/>
</dbReference>
<dbReference type="Reactome" id="R-MMU-975956">
    <property type="pathway name" value="Nonsense Mediated Decay (NMD) independent of the Exon Junction Complex (EJC)"/>
</dbReference>
<dbReference type="Reactome" id="R-MMU-975957">
    <property type="pathway name" value="Nonsense Mediated Decay (NMD) enhanced by the Exon Junction Complex (EJC)"/>
</dbReference>
<dbReference type="BioGRID-ORCS" id="67427">
    <property type="hits" value="24 hits in 68 CRISPR screens"/>
</dbReference>
<dbReference type="CD-CODE" id="CE726F99">
    <property type="entry name" value="Postsynaptic density"/>
</dbReference>
<dbReference type="ChiTaRS" id="Rps20">
    <property type="organism name" value="mouse"/>
</dbReference>
<dbReference type="PRO" id="PR:P60867"/>
<dbReference type="Proteomes" id="UP000000589">
    <property type="component" value="Chromosome 4"/>
</dbReference>
<dbReference type="RNAct" id="P60867">
    <property type="molecule type" value="protein"/>
</dbReference>
<dbReference type="Bgee" id="ENSMUSG00000028234">
    <property type="expression patterns" value="Expressed in ventricular zone and 214 other cell types or tissues"/>
</dbReference>
<dbReference type="ExpressionAtlas" id="P60867">
    <property type="expression patterns" value="baseline and differential"/>
</dbReference>
<dbReference type="GO" id="GO:0005737">
    <property type="term" value="C:cytoplasm"/>
    <property type="evidence" value="ECO:0000303"/>
    <property type="project" value="ComplexPortal"/>
</dbReference>
<dbReference type="GO" id="GO:0005829">
    <property type="term" value="C:cytosol"/>
    <property type="evidence" value="ECO:0000304"/>
    <property type="project" value="Reactome"/>
</dbReference>
<dbReference type="GO" id="GO:0022627">
    <property type="term" value="C:cytosolic small ribosomal subunit"/>
    <property type="evidence" value="ECO:0000314"/>
    <property type="project" value="UniProtKB"/>
</dbReference>
<dbReference type="GO" id="GO:0098794">
    <property type="term" value="C:postsynapse"/>
    <property type="evidence" value="ECO:0000303"/>
    <property type="project" value="SynGO"/>
</dbReference>
<dbReference type="GO" id="GO:0005840">
    <property type="term" value="C:ribosome"/>
    <property type="evidence" value="ECO:0000303"/>
    <property type="project" value="SynGO"/>
</dbReference>
<dbReference type="GO" id="GO:0045202">
    <property type="term" value="C:synapse"/>
    <property type="evidence" value="ECO:0000314"/>
    <property type="project" value="SynGO"/>
</dbReference>
<dbReference type="GO" id="GO:0097371">
    <property type="term" value="F:MDM2/MDM4 family protein binding"/>
    <property type="evidence" value="ECO:0007669"/>
    <property type="project" value="Ensembl"/>
</dbReference>
<dbReference type="GO" id="GO:0003723">
    <property type="term" value="F:RNA binding"/>
    <property type="evidence" value="ECO:0007669"/>
    <property type="project" value="InterPro"/>
</dbReference>
<dbReference type="GO" id="GO:0003735">
    <property type="term" value="F:structural constituent of ribosome"/>
    <property type="evidence" value="ECO:0000314"/>
    <property type="project" value="UniProtKB"/>
</dbReference>
<dbReference type="GO" id="GO:1990948">
    <property type="term" value="F:ubiquitin ligase inhibitor activity"/>
    <property type="evidence" value="ECO:0007669"/>
    <property type="project" value="Ensembl"/>
</dbReference>
<dbReference type="GO" id="GO:0002181">
    <property type="term" value="P:cytoplasmic translation"/>
    <property type="evidence" value="ECO:0000303"/>
    <property type="project" value="ComplexPortal"/>
</dbReference>
<dbReference type="GO" id="GO:1901798">
    <property type="term" value="P:positive regulation of signal transduction by p53 class mediator"/>
    <property type="evidence" value="ECO:0007669"/>
    <property type="project" value="Ensembl"/>
</dbReference>
<dbReference type="FunFam" id="3.30.70.600:FF:000011">
    <property type="entry name" value="Uncharacterized protein"/>
    <property type="match status" value="1"/>
</dbReference>
<dbReference type="Gene3D" id="3.30.70.600">
    <property type="entry name" value="Ribosomal protein S10 domain"/>
    <property type="match status" value="1"/>
</dbReference>
<dbReference type="HAMAP" id="MF_00508">
    <property type="entry name" value="Ribosomal_uS10"/>
    <property type="match status" value="1"/>
</dbReference>
<dbReference type="InterPro" id="IPR001848">
    <property type="entry name" value="Ribosomal_uS10"/>
</dbReference>
<dbReference type="InterPro" id="IPR018268">
    <property type="entry name" value="Ribosomal_uS10_CS"/>
</dbReference>
<dbReference type="InterPro" id="IPR027486">
    <property type="entry name" value="Ribosomal_uS10_dom"/>
</dbReference>
<dbReference type="InterPro" id="IPR036838">
    <property type="entry name" value="Ribosomal_uS10_dom_sf"/>
</dbReference>
<dbReference type="InterPro" id="IPR005729">
    <property type="entry name" value="Ribosomal_uS10_euk/arc"/>
</dbReference>
<dbReference type="NCBIfam" id="TIGR01046">
    <property type="entry name" value="uS10_euk_arch"/>
    <property type="match status" value="1"/>
</dbReference>
<dbReference type="PANTHER" id="PTHR11700">
    <property type="entry name" value="30S RIBOSOMAL PROTEIN S10 FAMILY MEMBER"/>
    <property type="match status" value="1"/>
</dbReference>
<dbReference type="Pfam" id="PF00338">
    <property type="entry name" value="Ribosomal_S10"/>
    <property type="match status" value="1"/>
</dbReference>
<dbReference type="PRINTS" id="PR00971">
    <property type="entry name" value="RIBOSOMALS10"/>
</dbReference>
<dbReference type="SMART" id="SM01403">
    <property type="entry name" value="Ribosomal_S10"/>
    <property type="match status" value="1"/>
</dbReference>
<dbReference type="SUPFAM" id="SSF54999">
    <property type="entry name" value="Ribosomal protein S10"/>
    <property type="match status" value="1"/>
</dbReference>
<dbReference type="PROSITE" id="PS00361">
    <property type="entry name" value="RIBOSOMAL_S10"/>
    <property type="match status" value="1"/>
</dbReference>
<accession>P60867</accession>
<accession>P17075</accession>
<comment type="function">
    <text evidence="3">Component of the small ribosomal subunit (PubMed:36517592). The ribosome is a large ribonucleoprotein complex responsible for the synthesis of proteins in the cell (PubMed:36517592).</text>
</comment>
<comment type="subunit">
    <text evidence="3">Component of the 40S small ribosomal subunit.</text>
</comment>
<comment type="subcellular location">
    <subcellularLocation>
        <location evidence="3">Cytoplasm</location>
    </subcellularLocation>
</comment>
<comment type="PTM">
    <text evidence="1">Polyubiquitinated by ZNF598 via 'Lys-63'-linked ubiquitin chains when a ribosome has stalled, initiating the ribosome quality control (RQC) pathway to degrade the potentially detrimental aberrant nascent polypeptide. Deubiquitinated by OTUD3 and USP21, antagonizing ZNF598 activity.</text>
</comment>
<comment type="PTM">
    <text evidence="2">Ufmylated by UFL1.</text>
</comment>
<comment type="similarity">
    <text evidence="4">Belongs to the universal ribosomal protein uS10 family.</text>
</comment>
<protein>
    <recommendedName>
        <fullName evidence="4">Small ribosomal subunit protein uS10</fullName>
    </recommendedName>
    <alternativeName>
        <fullName>40S ribosomal protein S20</fullName>
    </alternativeName>
</protein>
<reference key="1">
    <citation type="journal article" date="2005" name="Science">
        <title>The transcriptional landscape of the mammalian genome.</title>
        <authorList>
            <person name="Carninci P."/>
            <person name="Kasukawa T."/>
            <person name="Katayama S."/>
            <person name="Gough J."/>
            <person name="Frith M.C."/>
            <person name="Maeda N."/>
            <person name="Oyama R."/>
            <person name="Ravasi T."/>
            <person name="Lenhard B."/>
            <person name="Wells C."/>
            <person name="Kodzius R."/>
            <person name="Shimokawa K."/>
            <person name="Bajic V.B."/>
            <person name="Brenner S.E."/>
            <person name="Batalov S."/>
            <person name="Forrest A.R."/>
            <person name="Zavolan M."/>
            <person name="Davis M.J."/>
            <person name="Wilming L.G."/>
            <person name="Aidinis V."/>
            <person name="Allen J.E."/>
            <person name="Ambesi-Impiombato A."/>
            <person name="Apweiler R."/>
            <person name="Aturaliya R.N."/>
            <person name="Bailey T.L."/>
            <person name="Bansal M."/>
            <person name="Baxter L."/>
            <person name="Beisel K.W."/>
            <person name="Bersano T."/>
            <person name="Bono H."/>
            <person name="Chalk A.M."/>
            <person name="Chiu K.P."/>
            <person name="Choudhary V."/>
            <person name="Christoffels A."/>
            <person name="Clutterbuck D.R."/>
            <person name="Crowe M.L."/>
            <person name="Dalla E."/>
            <person name="Dalrymple B.P."/>
            <person name="de Bono B."/>
            <person name="Della Gatta G."/>
            <person name="di Bernardo D."/>
            <person name="Down T."/>
            <person name="Engstrom P."/>
            <person name="Fagiolini M."/>
            <person name="Faulkner G."/>
            <person name="Fletcher C.F."/>
            <person name="Fukushima T."/>
            <person name="Furuno M."/>
            <person name="Futaki S."/>
            <person name="Gariboldi M."/>
            <person name="Georgii-Hemming P."/>
            <person name="Gingeras T.R."/>
            <person name="Gojobori T."/>
            <person name="Green R.E."/>
            <person name="Gustincich S."/>
            <person name="Harbers M."/>
            <person name="Hayashi Y."/>
            <person name="Hensch T.K."/>
            <person name="Hirokawa N."/>
            <person name="Hill D."/>
            <person name="Huminiecki L."/>
            <person name="Iacono M."/>
            <person name="Ikeo K."/>
            <person name="Iwama A."/>
            <person name="Ishikawa T."/>
            <person name="Jakt M."/>
            <person name="Kanapin A."/>
            <person name="Katoh M."/>
            <person name="Kawasawa Y."/>
            <person name="Kelso J."/>
            <person name="Kitamura H."/>
            <person name="Kitano H."/>
            <person name="Kollias G."/>
            <person name="Krishnan S.P."/>
            <person name="Kruger A."/>
            <person name="Kummerfeld S.K."/>
            <person name="Kurochkin I.V."/>
            <person name="Lareau L.F."/>
            <person name="Lazarevic D."/>
            <person name="Lipovich L."/>
            <person name="Liu J."/>
            <person name="Liuni S."/>
            <person name="McWilliam S."/>
            <person name="Madan Babu M."/>
            <person name="Madera M."/>
            <person name="Marchionni L."/>
            <person name="Matsuda H."/>
            <person name="Matsuzawa S."/>
            <person name="Miki H."/>
            <person name="Mignone F."/>
            <person name="Miyake S."/>
            <person name="Morris K."/>
            <person name="Mottagui-Tabar S."/>
            <person name="Mulder N."/>
            <person name="Nakano N."/>
            <person name="Nakauchi H."/>
            <person name="Ng P."/>
            <person name="Nilsson R."/>
            <person name="Nishiguchi S."/>
            <person name="Nishikawa S."/>
            <person name="Nori F."/>
            <person name="Ohara O."/>
            <person name="Okazaki Y."/>
            <person name="Orlando V."/>
            <person name="Pang K.C."/>
            <person name="Pavan W.J."/>
            <person name="Pavesi G."/>
            <person name="Pesole G."/>
            <person name="Petrovsky N."/>
            <person name="Piazza S."/>
            <person name="Reed J."/>
            <person name="Reid J.F."/>
            <person name="Ring B.Z."/>
            <person name="Ringwald M."/>
            <person name="Rost B."/>
            <person name="Ruan Y."/>
            <person name="Salzberg S.L."/>
            <person name="Sandelin A."/>
            <person name="Schneider C."/>
            <person name="Schoenbach C."/>
            <person name="Sekiguchi K."/>
            <person name="Semple C.A."/>
            <person name="Seno S."/>
            <person name="Sessa L."/>
            <person name="Sheng Y."/>
            <person name="Shibata Y."/>
            <person name="Shimada H."/>
            <person name="Shimada K."/>
            <person name="Silva D."/>
            <person name="Sinclair B."/>
            <person name="Sperling S."/>
            <person name="Stupka E."/>
            <person name="Sugiura K."/>
            <person name="Sultana R."/>
            <person name="Takenaka Y."/>
            <person name="Taki K."/>
            <person name="Tammoja K."/>
            <person name="Tan S.L."/>
            <person name="Tang S."/>
            <person name="Taylor M.S."/>
            <person name="Tegner J."/>
            <person name="Teichmann S.A."/>
            <person name="Ueda H.R."/>
            <person name="van Nimwegen E."/>
            <person name="Verardo R."/>
            <person name="Wei C.L."/>
            <person name="Yagi K."/>
            <person name="Yamanishi H."/>
            <person name="Zabarovsky E."/>
            <person name="Zhu S."/>
            <person name="Zimmer A."/>
            <person name="Hide W."/>
            <person name="Bult C."/>
            <person name="Grimmond S.M."/>
            <person name="Teasdale R.D."/>
            <person name="Liu E.T."/>
            <person name="Brusic V."/>
            <person name="Quackenbush J."/>
            <person name="Wahlestedt C."/>
            <person name="Mattick J.S."/>
            <person name="Hume D.A."/>
            <person name="Kai C."/>
            <person name="Sasaki D."/>
            <person name="Tomaru Y."/>
            <person name="Fukuda S."/>
            <person name="Kanamori-Katayama M."/>
            <person name="Suzuki M."/>
            <person name="Aoki J."/>
            <person name="Arakawa T."/>
            <person name="Iida J."/>
            <person name="Imamura K."/>
            <person name="Itoh M."/>
            <person name="Kato T."/>
            <person name="Kawaji H."/>
            <person name="Kawagashira N."/>
            <person name="Kawashima T."/>
            <person name="Kojima M."/>
            <person name="Kondo S."/>
            <person name="Konno H."/>
            <person name="Nakano K."/>
            <person name="Ninomiya N."/>
            <person name="Nishio T."/>
            <person name="Okada M."/>
            <person name="Plessy C."/>
            <person name="Shibata K."/>
            <person name="Shiraki T."/>
            <person name="Suzuki S."/>
            <person name="Tagami M."/>
            <person name="Waki K."/>
            <person name="Watahiki A."/>
            <person name="Okamura-Oho Y."/>
            <person name="Suzuki H."/>
            <person name="Kawai J."/>
            <person name="Hayashizaki Y."/>
        </authorList>
    </citation>
    <scope>NUCLEOTIDE SEQUENCE [LARGE SCALE MRNA]</scope>
    <source>
        <strain>C57BL/6J</strain>
        <tissue>Kidney</tissue>
    </source>
</reference>
<reference key="2">
    <citation type="journal article" date="2004" name="Genome Res.">
        <title>The status, quality, and expansion of the NIH full-length cDNA project: the Mammalian Gene Collection (MGC).</title>
        <authorList>
            <consortium name="The MGC Project Team"/>
        </authorList>
    </citation>
    <scope>NUCLEOTIDE SEQUENCE [LARGE SCALE MRNA]</scope>
    <source>
        <tissue>Mammary tumor</tissue>
    </source>
</reference>
<reference key="3">
    <citation type="journal article" date="2010" name="Cell">
        <title>A tissue-specific atlas of mouse protein phosphorylation and expression.</title>
        <authorList>
            <person name="Huttlin E.L."/>
            <person name="Jedrychowski M.P."/>
            <person name="Elias J.E."/>
            <person name="Goswami T."/>
            <person name="Rad R."/>
            <person name="Beausoleil S.A."/>
            <person name="Villen J."/>
            <person name="Haas W."/>
            <person name="Sowa M.E."/>
            <person name="Gygi S.P."/>
        </authorList>
    </citation>
    <scope>IDENTIFICATION BY MASS SPECTROMETRY [LARGE SCALE ANALYSIS]</scope>
    <source>
        <tissue>Brain</tissue>
        <tissue>Brown adipose tissue</tissue>
        <tissue>Heart</tissue>
        <tissue>Kidney</tissue>
        <tissue>Liver</tissue>
        <tissue>Lung</tissue>
        <tissue>Pancreas</tissue>
        <tissue>Spleen</tissue>
        <tissue>Testis</tissue>
    </source>
</reference>
<reference key="4">
    <citation type="journal article" date="2013" name="Mol. Cell">
        <title>SIRT5-mediated lysine desuccinylation impacts diverse metabolic pathways.</title>
        <authorList>
            <person name="Park J."/>
            <person name="Chen Y."/>
            <person name="Tishkoff D.X."/>
            <person name="Peng C."/>
            <person name="Tan M."/>
            <person name="Dai L."/>
            <person name="Xie Z."/>
            <person name="Zhang Y."/>
            <person name="Zwaans B.M."/>
            <person name="Skinner M.E."/>
            <person name="Lombard D.B."/>
            <person name="Zhao Y."/>
        </authorList>
    </citation>
    <scope>ACETYLATION [LARGE SCALE ANALYSIS] AT LYS-34 AND LYS-75</scope>
    <scope>SUCCINYLATION [LARGE SCALE ANALYSIS] AT LYS-8</scope>
    <scope>IDENTIFICATION BY MASS SPECTROMETRY [LARGE SCALE ANALYSIS]</scope>
    <source>
        <tissue>Embryonic fibroblast</tissue>
        <tissue>Liver</tissue>
    </source>
</reference>
<reference key="5">
    <citation type="journal article" date="2017" name="Cell">
        <title>The mammalian ribo-interactome reveals ribosome functional diversity and heterogeneity.</title>
        <authorList>
            <person name="Simsek D."/>
            <person name="Tiu G.C."/>
            <person name="Flynn R.A."/>
            <person name="Byeon G.W."/>
            <person name="Leppek K."/>
            <person name="Xu A.F."/>
            <person name="Chang H.Y."/>
            <person name="Barna M."/>
        </authorList>
    </citation>
    <scope>UFMYLATION</scope>
</reference>
<reference evidence="5 6" key="6">
    <citation type="journal article" date="2022" name="Nature">
        <title>A male germ-cell-specific ribosome controls male fertility.</title>
        <authorList>
            <person name="Li H."/>
            <person name="Huo Y."/>
            <person name="He X."/>
            <person name="Yao L."/>
            <person name="Zhang H."/>
            <person name="Cui Y."/>
            <person name="Xiao H."/>
            <person name="Xie W."/>
            <person name="Zhang D."/>
            <person name="Wang Y."/>
            <person name="Zhang S."/>
            <person name="Tu H."/>
            <person name="Cheng Y."/>
            <person name="Guo Y."/>
            <person name="Cao X."/>
            <person name="Zhu Y."/>
            <person name="Jiang T."/>
            <person name="Guo X."/>
            <person name="Qin Y."/>
            <person name="Sha J."/>
        </authorList>
    </citation>
    <scope>STRUCTURE BY ELECTRON MICROSCOPY (3.03 ANGSTROMS) OF RIBOSOME</scope>
    <scope>FUNCTION</scope>
    <scope>SUBUNIT</scope>
    <scope>SUBCELLULAR LOCATION</scope>
</reference>
<sequence>MAFKDTGKTPVEPEVAIHRIRITLTSRNVKSLEKVCADLIRGAKEKNLKVKGPVRMPTKTLRITTRKTPCGEGSKTWDRFQMRIHKRLIDLHSPSEIVKQITSISIEPGVEVEVTIADA</sequence>
<name>RS20_MOUSE</name>